<dbReference type="EC" id="2.7.2.1" evidence="1"/>
<dbReference type="EMBL" id="AP008934">
    <property type="protein sequence ID" value="BAE18199.1"/>
    <property type="molecule type" value="Genomic_DNA"/>
</dbReference>
<dbReference type="RefSeq" id="WP_011302897.1">
    <property type="nucleotide sequence ID" value="NZ_MTGA01000033.1"/>
</dbReference>
<dbReference type="SMR" id="Q49YE2"/>
<dbReference type="GeneID" id="3615422"/>
<dbReference type="KEGG" id="ssp:SSP1054"/>
<dbReference type="PATRIC" id="fig|342451.11.peg.1053"/>
<dbReference type="eggNOG" id="COG0282">
    <property type="taxonomic scope" value="Bacteria"/>
</dbReference>
<dbReference type="HOGENOM" id="CLU_020352_0_1_9"/>
<dbReference type="OrthoDB" id="9802453at2"/>
<dbReference type="UniPathway" id="UPA00340">
    <property type="reaction ID" value="UER00458"/>
</dbReference>
<dbReference type="Proteomes" id="UP000006371">
    <property type="component" value="Chromosome"/>
</dbReference>
<dbReference type="GO" id="GO:0005737">
    <property type="term" value="C:cytoplasm"/>
    <property type="evidence" value="ECO:0007669"/>
    <property type="project" value="UniProtKB-SubCell"/>
</dbReference>
<dbReference type="GO" id="GO:0008776">
    <property type="term" value="F:acetate kinase activity"/>
    <property type="evidence" value="ECO:0007669"/>
    <property type="project" value="UniProtKB-UniRule"/>
</dbReference>
<dbReference type="GO" id="GO:0005524">
    <property type="term" value="F:ATP binding"/>
    <property type="evidence" value="ECO:0007669"/>
    <property type="project" value="UniProtKB-KW"/>
</dbReference>
<dbReference type="GO" id="GO:0000287">
    <property type="term" value="F:magnesium ion binding"/>
    <property type="evidence" value="ECO:0007669"/>
    <property type="project" value="UniProtKB-UniRule"/>
</dbReference>
<dbReference type="GO" id="GO:0006083">
    <property type="term" value="P:acetate metabolic process"/>
    <property type="evidence" value="ECO:0007669"/>
    <property type="project" value="TreeGrafter"/>
</dbReference>
<dbReference type="GO" id="GO:0006085">
    <property type="term" value="P:acetyl-CoA biosynthetic process"/>
    <property type="evidence" value="ECO:0007669"/>
    <property type="project" value="UniProtKB-UniRule"/>
</dbReference>
<dbReference type="CDD" id="cd24010">
    <property type="entry name" value="ASKHA_NBD_AcK_PK"/>
    <property type="match status" value="1"/>
</dbReference>
<dbReference type="Gene3D" id="3.30.420.40">
    <property type="match status" value="2"/>
</dbReference>
<dbReference type="HAMAP" id="MF_00020">
    <property type="entry name" value="Acetate_kinase"/>
    <property type="match status" value="1"/>
</dbReference>
<dbReference type="InterPro" id="IPR004372">
    <property type="entry name" value="Ac/propionate_kinase"/>
</dbReference>
<dbReference type="InterPro" id="IPR000890">
    <property type="entry name" value="Aliphatic_acid_kin_short-chain"/>
</dbReference>
<dbReference type="InterPro" id="IPR023865">
    <property type="entry name" value="Aliphatic_acid_kinase_CS"/>
</dbReference>
<dbReference type="InterPro" id="IPR043129">
    <property type="entry name" value="ATPase_NBD"/>
</dbReference>
<dbReference type="NCBIfam" id="TIGR00016">
    <property type="entry name" value="ackA"/>
    <property type="match status" value="1"/>
</dbReference>
<dbReference type="PANTHER" id="PTHR21060">
    <property type="entry name" value="ACETATE KINASE"/>
    <property type="match status" value="1"/>
</dbReference>
<dbReference type="PANTHER" id="PTHR21060:SF15">
    <property type="entry name" value="ACETATE KINASE-RELATED"/>
    <property type="match status" value="1"/>
</dbReference>
<dbReference type="Pfam" id="PF00871">
    <property type="entry name" value="Acetate_kinase"/>
    <property type="match status" value="1"/>
</dbReference>
<dbReference type="PIRSF" id="PIRSF000722">
    <property type="entry name" value="Acetate_prop_kin"/>
    <property type="match status" value="1"/>
</dbReference>
<dbReference type="PRINTS" id="PR00471">
    <property type="entry name" value="ACETATEKNASE"/>
</dbReference>
<dbReference type="SUPFAM" id="SSF53067">
    <property type="entry name" value="Actin-like ATPase domain"/>
    <property type="match status" value="2"/>
</dbReference>
<dbReference type="PROSITE" id="PS01075">
    <property type="entry name" value="ACETATE_KINASE_1"/>
    <property type="match status" value="1"/>
</dbReference>
<dbReference type="PROSITE" id="PS01076">
    <property type="entry name" value="ACETATE_KINASE_2"/>
    <property type="match status" value="1"/>
</dbReference>
<proteinExistence type="inferred from homology"/>
<sequence length="399" mass="43926">MSKLILAINAGSSSLKFQLIEMPEEKIVTKGLIERIGLKDSVFTIEVNGDKIKETNDIADHEEAVNIMLDSFKKHGVIDSIYDINGTGHRVVHGGELFPESVYITDEVEKQIESLSELAPLHNPANLMGIRAFRKLLPEIPHVAVFDTSFHQTMPEKSFLYSLPYQYYKDYGIRKYGFHGTSHKYVSQRAADILGKPIEELRLISCHIGNGASIAAIDGGESVDTSMGFTPLAGVTMGTRSGNIDPALIPFIMEKTGKNAEEVLNTLNKESGLLGISGTSSDLRDIQGEAEEGKDRAQLALDVFASRIHKYIGSYATRMHGVDVIVFTAGVGENSDVVRAKVLEGLEFMGVYWDAKKNESIHGEEAFINYPHSPVKVIVIPTNEEVMIARDVINFGDLK</sequence>
<comment type="function">
    <text evidence="1">Catalyzes the formation of acetyl phosphate from acetate and ATP. Can also catalyze the reverse reaction.</text>
</comment>
<comment type="catalytic activity">
    <reaction evidence="1">
        <text>acetate + ATP = acetyl phosphate + ADP</text>
        <dbReference type="Rhea" id="RHEA:11352"/>
        <dbReference type="ChEBI" id="CHEBI:22191"/>
        <dbReference type="ChEBI" id="CHEBI:30089"/>
        <dbReference type="ChEBI" id="CHEBI:30616"/>
        <dbReference type="ChEBI" id="CHEBI:456216"/>
        <dbReference type="EC" id="2.7.2.1"/>
    </reaction>
</comment>
<comment type="cofactor">
    <cofactor evidence="1">
        <name>Mg(2+)</name>
        <dbReference type="ChEBI" id="CHEBI:18420"/>
    </cofactor>
    <cofactor evidence="1">
        <name>Mn(2+)</name>
        <dbReference type="ChEBI" id="CHEBI:29035"/>
    </cofactor>
    <text evidence="1">Mg(2+). Can also accept Mn(2+).</text>
</comment>
<comment type="pathway">
    <text evidence="1">Metabolic intermediate biosynthesis; acetyl-CoA biosynthesis; acetyl-CoA from acetate: step 1/2.</text>
</comment>
<comment type="subunit">
    <text evidence="1">Homodimer.</text>
</comment>
<comment type="subcellular location">
    <subcellularLocation>
        <location evidence="1">Cytoplasm</location>
    </subcellularLocation>
</comment>
<comment type="similarity">
    <text evidence="1">Belongs to the acetokinase family.</text>
</comment>
<organism>
    <name type="scientific">Staphylococcus saprophyticus subsp. saprophyticus (strain ATCC 15305 / DSM 20229 / NCIMB 8711 / NCTC 7292 / S-41)</name>
    <dbReference type="NCBI Taxonomy" id="342451"/>
    <lineage>
        <taxon>Bacteria</taxon>
        <taxon>Bacillati</taxon>
        <taxon>Bacillota</taxon>
        <taxon>Bacilli</taxon>
        <taxon>Bacillales</taxon>
        <taxon>Staphylococcaceae</taxon>
        <taxon>Staphylococcus</taxon>
    </lineage>
</organism>
<gene>
    <name evidence="1" type="primary">ackA</name>
    <name type="ordered locus">SSP1054</name>
</gene>
<reference key="1">
    <citation type="journal article" date="2005" name="Proc. Natl. Acad. Sci. U.S.A.">
        <title>Whole genome sequence of Staphylococcus saprophyticus reveals the pathogenesis of uncomplicated urinary tract infection.</title>
        <authorList>
            <person name="Kuroda M."/>
            <person name="Yamashita A."/>
            <person name="Hirakawa H."/>
            <person name="Kumano M."/>
            <person name="Morikawa K."/>
            <person name="Higashide M."/>
            <person name="Maruyama A."/>
            <person name="Inose Y."/>
            <person name="Matoba K."/>
            <person name="Toh H."/>
            <person name="Kuhara S."/>
            <person name="Hattori M."/>
            <person name="Ohta T."/>
        </authorList>
    </citation>
    <scope>NUCLEOTIDE SEQUENCE [LARGE SCALE GENOMIC DNA]</scope>
    <source>
        <strain>ATCC 15305 / DSM 20229 / NCIMB 8711 / NCTC 7292 / S-41</strain>
    </source>
</reference>
<evidence type="ECO:0000255" key="1">
    <source>
        <dbReference type="HAMAP-Rule" id="MF_00020"/>
    </source>
</evidence>
<keyword id="KW-0067">ATP-binding</keyword>
<keyword id="KW-0963">Cytoplasm</keyword>
<keyword id="KW-0418">Kinase</keyword>
<keyword id="KW-0460">Magnesium</keyword>
<keyword id="KW-0479">Metal-binding</keyword>
<keyword id="KW-0547">Nucleotide-binding</keyword>
<keyword id="KW-1185">Reference proteome</keyword>
<keyword id="KW-0808">Transferase</keyword>
<protein>
    <recommendedName>
        <fullName evidence="1">Acetate kinase</fullName>
        <ecNumber evidence="1">2.7.2.1</ecNumber>
    </recommendedName>
    <alternativeName>
        <fullName evidence="1">Acetokinase</fullName>
    </alternativeName>
</protein>
<name>ACKA_STAS1</name>
<accession>Q49YE2</accession>
<feature type="chain" id="PRO_1000002267" description="Acetate kinase">
    <location>
        <begin position="1"/>
        <end position="399"/>
    </location>
</feature>
<feature type="active site" description="Proton donor/acceptor" evidence="1">
    <location>
        <position position="147"/>
    </location>
</feature>
<feature type="binding site" evidence="1">
    <location>
        <position position="9"/>
    </location>
    <ligand>
        <name>Mg(2+)</name>
        <dbReference type="ChEBI" id="CHEBI:18420"/>
    </ligand>
</feature>
<feature type="binding site" evidence="1">
    <location>
        <position position="16"/>
    </location>
    <ligand>
        <name>ATP</name>
        <dbReference type="ChEBI" id="CHEBI:30616"/>
    </ligand>
</feature>
<feature type="binding site" evidence="1">
    <location>
        <position position="90"/>
    </location>
    <ligand>
        <name>substrate</name>
    </ligand>
</feature>
<feature type="binding site" evidence="1">
    <location>
        <begin position="207"/>
        <end position="211"/>
    </location>
    <ligand>
        <name>ATP</name>
        <dbReference type="ChEBI" id="CHEBI:30616"/>
    </ligand>
</feature>
<feature type="binding site" evidence="1">
    <location>
        <begin position="282"/>
        <end position="284"/>
    </location>
    <ligand>
        <name>ATP</name>
        <dbReference type="ChEBI" id="CHEBI:30616"/>
    </ligand>
</feature>
<feature type="binding site" evidence="1">
    <location>
        <begin position="330"/>
        <end position="334"/>
    </location>
    <ligand>
        <name>ATP</name>
        <dbReference type="ChEBI" id="CHEBI:30616"/>
    </ligand>
</feature>
<feature type="binding site" evidence="1">
    <location>
        <position position="384"/>
    </location>
    <ligand>
        <name>Mg(2+)</name>
        <dbReference type="ChEBI" id="CHEBI:18420"/>
    </ligand>
</feature>
<feature type="site" description="Transition state stabilizer" evidence="1">
    <location>
        <position position="179"/>
    </location>
</feature>
<feature type="site" description="Transition state stabilizer" evidence="1">
    <location>
        <position position="240"/>
    </location>
</feature>